<organism>
    <name type="scientific">Enterococcus faecalis (strain ATCC 700802 / V583)</name>
    <dbReference type="NCBI Taxonomy" id="226185"/>
    <lineage>
        <taxon>Bacteria</taxon>
        <taxon>Bacillati</taxon>
        <taxon>Bacillota</taxon>
        <taxon>Bacilli</taxon>
        <taxon>Lactobacillales</taxon>
        <taxon>Enterococcaceae</taxon>
        <taxon>Enterococcus</taxon>
    </lineage>
</organism>
<sequence>MLSKEKIARINELANKAKVEELSAKEKVEQQELRKEYLEAFRGGMRHHIEGMKVVDQEGTDVTPEKLKKIQREKGLHNRK</sequence>
<protein>
    <recommendedName>
        <fullName evidence="1">UPF0291 protein EF_1580</fullName>
    </recommendedName>
</protein>
<keyword id="KW-0963">Cytoplasm</keyword>
<keyword id="KW-1185">Reference proteome</keyword>
<feature type="chain" id="PRO_0000094970" description="UPF0291 protein EF_1580">
    <location>
        <begin position="1"/>
        <end position="80"/>
    </location>
</feature>
<feature type="region of interest" description="Disordered" evidence="2">
    <location>
        <begin position="60"/>
        <end position="80"/>
    </location>
</feature>
<feature type="compositionally biased region" description="Basic and acidic residues" evidence="2">
    <location>
        <begin position="63"/>
        <end position="80"/>
    </location>
</feature>
<evidence type="ECO:0000255" key="1">
    <source>
        <dbReference type="HAMAP-Rule" id="MF_01103"/>
    </source>
</evidence>
<evidence type="ECO:0000256" key="2">
    <source>
        <dbReference type="SAM" id="MobiDB-lite"/>
    </source>
</evidence>
<dbReference type="EMBL" id="AE016830">
    <property type="protein sequence ID" value="AAO81367.1"/>
    <property type="molecule type" value="Genomic_DNA"/>
</dbReference>
<dbReference type="RefSeq" id="NP_815297.1">
    <property type="nucleotide sequence ID" value="NC_004668.1"/>
</dbReference>
<dbReference type="RefSeq" id="WP_002382327.1">
    <property type="nucleotide sequence ID" value="NZ_KE136528.1"/>
</dbReference>
<dbReference type="SMR" id="Q834Q9"/>
<dbReference type="STRING" id="226185.EF_1580"/>
<dbReference type="EnsemblBacteria" id="AAO81367">
    <property type="protein sequence ID" value="AAO81367"/>
    <property type="gene ID" value="EF_1580"/>
</dbReference>
<dbReference type="KEGG" id="efa:EF1580"/>
<dbReference type="PATRIC" id="fig|226185.45.peg.1925"/>
<dbReference type="eggNOG" id="COG4224">
    <property type="taxonomic scope" value="Bacteria"/>
</dbReference>
<dbReference type="HOGENOM" id="CLU_173137_0_2_9"/>
<dbReference type="Proteomes" id="UP000001415">
    <property type="component" value="Chromosome"/>
</dbReference>
<dbReference type="GO" id="GO:0005737">
    <property type="term" value="C:cytoplasm"/>
    <property type="evidence" value="ECO:0007669"/>
    <property type="project" value="UniProtKB-SubCell"/>
</dbReference>
<dbReference type="Gene3D" id="1.10.287.540">
    <property type="entry name" value="Helix hairpin bin"/>
    <property type="match status" value="1"/>
</dbReference>
<dbReference type="HAMAP" id="MF_01103">
    <property type="entry name" value="UPF0291"/>
    <property type="match status" value="1"/>
</dbReference>
<dbReference type="InterPro" id="IPR009242">
    <property type="entry name" value="DUF896"/>
</dbReference>
<dbReference type="NCBIfam" id="NF002711">
    <property type="entry name" value="PRK02539.1"/>
    <property type="match status" value="1"/>
</dbReference>
<dbReference type="PANTHER" id="PTHR37300">
    <property type="entry name" value="UPF0291 PROTEIN CBO2609/CLC_2481"/>
    <property type="match status" value="1"/>
</dbReference>
<dbReference type="PANTHER" id="PTHR37300:SF1">
    <property type="entry name" value="UPF0291 PROTEIN YNZC"/>
    <property type="match status" value="1"/>
</dbReference>
<dbReference type="Pfam" id="PF05979">
    <property type="entry name" value="DUF896"/>
    <property type="match status" value="1"/>
</dbReference>
<dbReference type="SUPFAM" id="SSF158221">
    <property type="entry name" value="YnzC-like"/>
    <property type="match status" value="1"/>
</dbReference>
<reference key="1">
    <citation type="journal article" date="2003" name="Science">
        <title>Role of mobile DNA in the evolution of vancomycin-resistant Enterococcus faecalis.</title>
        <authorList>
            <person name="Paulsen I.T."/>
            <person name="Banerjei L."/>
            <person name="Myers G.S.A."/>
            <person name="Nelson K.E."/>
            <person name="Seshadri R."/>
            <person name="Read T.D."/>
            <person name="Fouts D.E."/>
            <person name="Eisen J.A."/>
            <person name="Gill S.R."/>
            <person name="Heidelberg J.F."/>
            <person name="Tettelin H."/>
            <person name="Dodson R.J."/>
            <person name="Umayam L.A."/>
            <person name="Brinkac L.M."/>
            <person name="Beanan M.J."/>
            <person name="Daugherty S.C."/>
            <person name="DeBoy R.T."/>
            <person name="Durkin S.A."/>
            <person name="Kolonay J.F."/>
            <person name="Madupu R."/>
            <person name="Nelson W.C."/>
            <person name="Vamathevan J.J."/>
            <person name="Tran B."/>
            <person name="Upton J."/>
            <person name="Hansen T."/>
            <person name="Shetty J."/>
            <person name="Khouri H.M."/>
            <person name="Utterback T.R."/>
            <person name="Radune D."/>
            <person name="Ketchum K.A."/>
            <person name="Dougherty B.A."/>
            <person name="Fraser C.M."/>
        </authorList>
    </citation>
    <scope>NUCLEOTIDE SEQUENCE [LARGE SCALE GENOMIC DNA]</scope>
    <source>
        <strain>ATCC 700802 / V583</strain>
    </source>
</reference>
<proteinExistence type="inferred from homology"/>
<comment type="subcellular location">
    <subcellularLocation>
        <location evidence="1">Cytoplasm</location>
    </subcellularLocation>
</comment>
<comment type="similarity">
    <text evidence="1">Belongs to the UPF0291 family.</text>
</comment>
<accession>Q834Q9</accession>
<gene>
    <name type="ordered locus">EF_1580</name>
</gene>
<name>Y1580_ENTFA</name>